<name>IL20_MOUSE</name>
<organism>
    <name type="scientific">Mus musculus</name>
    <name type="common">Mouse</name>
    <dbReference type="NCBI Taxonomy" id="10090"/>
    <lineage>
        <taxon>Eukaryota</taxon>
        <taxon>Metazoa</taxon>
        <taxon>Chordata</taxon>
        <taxon>Craniata</taxon>
        <taxon>Vertebrata</taxon>
        <taxon>Euteleostomi</taxon>
        <taxon>Mammalia</taxon>
        <taxon>Eutheria</taxon>
        <taxon>Euarchontoglires</taxon>
        <taxon>Glires</taxon>
        <taxon>Rodentia</taxon>
        <taxon>Myomorpha</taxon>
        <taxon>Muroidea</taxon>
        <taxon>Muridae</taxon>
        <taxon>Murinae</taxon>
        <taxon>Mus</taxon>
        <taxon>Mus</taxon>
    </lineage>
</organism>
<feature type="signal peptide" evidence="2">
    <location>
        <begin position="1"/>
        <end position="24"/>
    </location>
</feature>
<feature type="chain" id="PRO_0000015382" description="Interleukin-20">
    <location>
        <begin position="25"/>
        <end position="176"/>
    </location>
</feature>
<feature type="disulfide bond" evidence="2">
    <location>
        <begin position="33"/>
        <end position="126"/>
    </location>
</feature>
<feature type="disulfide bond" evidence="2">
    <location>
        <begin position="80"/>
        <end position="132"/>
    </location>
</feature>
<feature type="disulfide bond" evidence="2">
    <location>
        <begin position="81"/>
        <end position="134"/>
    </location>
</feature>
<protein>
    <recommendedName>
        <fullName>Interleukin-20</fullName>
        <shortName>IL-20</shortName>
    </recommendedName>
    <alternativeName>
        <fullName>Cytokine Zcyto10</fullName>
    </alternativeName>
</protein>
<reference key="1">
    <citation type="journal article" date="2001" name="Cell">
        <title>Interleukin 20: discovery, receptor identification, and role in epidermal function.</title>
        <authorList>
            <person name="Blumberg H."/>
            <person name="Conklin D."/>
            <person name="Xu W.F."/>
            <person name="Grossmann A."/>
            <person name="Brender T."/>
            <person name="Carollo S."/>
            <person name="Eagan M."/>
            <person name="Foster D."/>
            <person name="Haldeman B.A."/>
            <person name="Hammond A."/>
            <person name="Haugen H."/>
            <person name="Jelinek L."/>
            <person name="Kelly J.D."/>
            <person name="Madden K."/>
            <person name="Maurer M.F."/>
            <person name="Parrish-Novak J."/>
            <person name="Prunkard D."/>
            <person name="Sexson S."/>
            <person name="Sprecher C."/>
            <person name="Waggie K."/>
            <person name="West J."/>
            <person name="Whitmore T.E."/>
            <person name="Yao L."/>
            <person name="Kuechle M.K."/>
            <person name="Dale B.A."/>
            <person name="Chandrasekher Y.A."/>
        </authorList>
    </citation>
    <scope>NUCLEOTIDE SEQUENCE [MRNA]</scope>
    <source>
        <tissue>Skin</tissue>
    </source>
</reference>
<reference key="2">
    <citation type="journal article" date="2007" name="Proc. Natl. Acad. Sci. U.S.A.">
        <title>IL-20 is an arteriogenic cytokine that remodels collateral networks and improves functions of ischemic hind limbs.</title>
        <authorList>
            <person name="Tritsaris K."/>
            <person name="Myren M."/>
            <person name="Ditlev S.B."/>
            <person name="Huebschmann M.V."/>
            <person name="van der Blom I."/>
            <person name="Hansen A.J."/>
            <person name="Olsen U.B."/>
            <person name="Cao R."/>
            <person name="Zhang J."/>
            <person name="Jia T."/>
            <person name="Wahlberg E."/>
            <person name="Dissing S."/>
            <person name="Cao Y."/>
        </authorList>
    </citation>
    <scope>FUNCTION</scope>
</reference>
<reference key="3">
    <citation type="journal article" date="2013" name="Nat. Immunol.">
        <title>Signaling via the IL-20 receptor inhibits cutaneous production of IL-1beta and IL-17A to promote infection with methicillin-resistant Staphylococcus aureus.</title>
        <authorList>
            <person name="Myles I.A."/>
            <person name="Fontecilla N.M."/>
            <person name="Valdez P.A."/>
            <person name="Vithayathil P.J."/>
            <person name="Naik S."/>
            <person name="Belkaid Y."/>
            <person name="Ouyang W."/>
            <person name="Datta S.K."/>
        </authorList>
    </citation>
    <scope>FUNCTION</scope>
</reference>
<gene>
    <name type="primary">Il20</name>
    <name type="synonym">Zcyto10</name>
</gene>
<comment type="function">
    <text evidence="1 3 4">Pro-inflammatory and angiogenic cytokine mainly secreted by monocytes and skin keratinocytes that plays crucial roles in immune responses, regulation of inflammatory responses, hemopoiesis, as well as epidermal cell and keratinocyte differentiation (PubMed:23793061). Enhances tissue remodeling and wound-healing activities and restores the homeostasis of epithelial layers during infection and inflammatory responses to maintain tissue integrity. Affects multiple actin-mediated functions in activated neutrophils leading to inhibition of phagocytosis, granule exocytosis, and migration. Exert its effects via the type I IL-20 receptor complex consisting of IL20RA and IL20RB. Alternatively, can mediate its activity through a second receptor complex called type II IL-20 receptor complex composed of IL22RA1 and IL20RB (By similarity). Acts as an arteriogenic and vascular remodeling factory by activating a range of signaling processes including phosphorylations of JAK2 and STAT5 as well as activation of the serine and threonine kinases AKT and ERK1/2 (PubMed:17878297). Alternatively, can activate STAT3 phosphorylation and transcriptional activity in a JAK2, ERK1/2 and p38 MAPK-dependent manner in keratinocytes (By similarity).</text>
</comment>
<comment type="subunit">
    <text evidence="1">Forms a 1:1:1 heterotrimeric complex with its primary high-affinity heterodimeric receptor IL20RA/IL20RB.</text>
</comment>
<comment type="subcellular location">
    <subcellularLocation>
        <location>Secreted</location>
    </subcellularLocation>
</comment>
<comment type="similarity">
    <text evidence="5">Belongs to the IL-10 family.</text>
</comment>
<keyword id="KW-0202">Cytokine</keyword>
<keyword id="KW-1015">Disulfide bond</keyword>
<keyword id="KW-1185">Reference proteome</keyword>
<keyword id="KW-0964">Secreted</keyword>
<keyword id="KW-0732">Signal</keyword>
<sequence length="176" mass="20098">MKGFGLAFGLFSAVGFLLWTPLTGLKTLHLGSCVITANLQAIQKEFSEIRDSVQAEDTNIDIRILRTTESLKDIKSLDRCCFLRHLVRFYLDRVFKVYQTPDHHTLRKISSLANSFLIIKKDLSVCHSHMACHCGEEAMEKYNQILSHFIELELQAAVVKALGELGILLRWMEEML</sequence>
<accession>Q9JKV9</accession>
<dbReference type="EMBL" id="AF224267">
    <property type="protein sequence ID" value="AAF36680.1"/>
    <property type="molecule type" value="mRNA"/>
</dbReference>
<dbReference type="CCDS" id="CCDS15263.1"/>
<dbReference type="RefSeq" id="NP_001298020.1">
    <property type="nucleotide sequence ID" value="NM_001311091.1"/>
</dbReference>
<dbReference type="RefSeq" id="NP_067355.1">
    <property type="nucleotide sequence ID" value="NM_021380.2"/>
</dbReference>
<dbReference type="SMR" id="Q9JKV9"/>
<dbReference type="FunCoup" id="Q9JKV9">
    <property type="interactions" value="794"/>
</dbReference>
<dbReference type="STRING" id="10090.ENSMUSP00000027673"/>
<dbReference type="PhosphoSitePlus" id="Q9JKV9"/>
<dbReference type="PaxDb" id="10090-ENSMUSP00000027673"/>
<dbReference type="Antibodypedia" id="34589">
    <property type="antibodies" value="551 antibodies from 33 providers"/>
</dbReference>
<dbReference type="DNASU" id="58181"/>
<dbReference type="Ensembl" id="ENSMUST00000027673.11">
    <property type="protein sequence ID" value="ENSMUSP00000027673.5"/>
    <property type="gene ID" value="ENSMUSG00000026416.13"/>
</dbReference>
<dbReference type="GeneID" id="58181"/>
<dbReference type="KEGG" id="mmu:58181"/>
<dbReference type="UCSC" id="uc007cmr.1">
    <property type="organism name" value="mouse"/>
</dbReference>
<dbReference type="AGR" id="MGI:1890473"/>
<dbReference type="CTD" id="50604"/>
<dbReference type="MGI" id="MGI:1890473">
    <property type="gene designation" value="Il20"/>
</dbReference>
<dbReference type="VEuPathDB" id="HostDB:ENSMUSG00000026416"/>
<dbReference type="eggNOG" id="ENOG502S5RZ">
    <property type="taxonomic scope" value="Eukaryota"/>
</dbReference>
<dbReference type="GeneTree" id="ENSGT00950000183124"/>
<dbReference type="HOGENOM" id="CLU_098690_0_0_1"/>
<dbReference type="InParanoid" id="Q9JKV9"/>
<dbReference type="OMA" id="RLCHARM"/>
<dbReference type="OrthoDB" id="9938154at2759"/>
<dbReference type="PhylomeDB" id="Q9JKV9"/>
<dbReference type="TreeFam" id="TF333253"/>
<dbReference type="Reactome" id="R-MMU-8854691">
    <property type="pathway name" value="Interleukin-20 family signaling"/>
</dbReference>
<dbReference type="BioGRID-ORCS" id="58181">
    <property type="hits" value="1 hit in 77 CRISPR screens"/>
</dbReference>
<dbReference type="PRO" id="PR:Q9JKV9"/>
<dbReference type="Proteomes" id="UP000000589">
    <property type="component" value="Chromosome 1"/>
</dbReference>
<dbReference type="RNAct" id="Q9JKV9">
    <property type="molecule type" value="protein"/>
</dbReference>
<dbReference type="Bgee" id="ENSMUSG00000026416">
    <property type="expression patterns" value="Expressed in animal zygote and 15 other cell types or tissues"/>
</dbReference>
<dbReference type="ExpressionAtlas" id="Q9JKV9">
    <property type="expression patterns" value="baseline and differential"/>
</dbReference>
<dbReference type="GO" id="GO:0005615">
    <property type="term" value="C:extracellular space"/>
    <property type="evidence" value="ECO:0000314"/>
    <property type="project" value="MGI"/>
</dbReference>
<dbReference type="GO" id="GO:0005125">
    <property type="term" value="F:cytokine activity"/>
    <property type="evidence" value="ECO:0000314"/>
    <property type="project" value="MGI"/>
</dbReference>
<dbReference type="GO" id="GO:0045517">
    <property type="term" value="F:interleukin-20 receptor binding"/>
    <property type="evidence" value="ECO:0000314"/>
    <property type="project" value="UniProtKB"/>
</dbReference>
<dbReference type="GO" id="GO:0045518">
    <property type="term" value="F:interleukin-22 receptor binding"/>
    <property type="evidence" value="ECO:0000353"/>
    <property type="project" value="MGI"/>
</dbReference>
<dbReference type="GO" id="GO:0030097">
    <property type="term" value="P:hemopoiesis"/>
    <property type="evidence" value="ECO:0000303"/>
    <property type="project" value="UniProtKB"/>
</dbReference>
<dbReference type="GO" id="GO:0030316">
    <property type="term" value="P:osteoclast differentiation"/>
    <property type="evidence" value="ECO:0000315"/>
    <property type="project" value="MGI"/>
</dbReference>
<dbReference type="GO" id="GO:0045672">
    <property type="term" value="P:positive regulation of osteoclast differentiation"/>
    <property type="evidence" value="ECO:0000315"/>
    <property type="project" value="MGI"/>
</dbReference>
<dbReference type="FunFam" id="1.20.1250.10:FF:000019">
    <property type="entry name" value="Interleukin 20"/>
    <property type="match status" value="1"/>
</dbReference>
<dbReference type="Gene3D" id="1.20.1250.10">
    <property type="match status" value="1"/>
</dbReference>
<dbReference type="InterPro" id="IPR009079">
    <property type="entry name" value="4_helix_cytokine-like_core"/>
</dbReference>
<dbReference type="InterPro" id="IPR020443">
    <property type="entry name" value="IL-10/19/20/24/26"/>
</dbReference>
<dbReference type="InterPro" id="IPR020423">
    <property type="entry name" value="IL-10_CS"/>
</dbReference>
<dbReference type="InterPro" id="IPR020442">
    <property type="entry name" value="IL-20"/>
</dbReference>
<dbReference type="PANTHER" id="PTHR48482">
    <property type="entry name" value="INTERLEUKIN-19-RELATED"/>
    <property type="match status" value="1"/>
</dbReference>
<dbReference type="PANTHER" id="PTHR48482:SF2">
    <property type="entry name" value="INTERLEUKIN-20"/>
    <property type="match status" value="1"/>
</dbReference>
<dbReference type="Pfam" id="PF00726">
    <property type="entry name" value="IL10"/>
    <property type="match status" value="1"/>
</dbReference>
<dbReference type="PRINTS" id="PR01935">
    <property type="entry name" value="INTRLEUKIN20"/>
</dbReference>
<dbReference type="SMART" id="SM00188">
    <property type="entry name" value="IL10"/>
    <property type="match status" value="1"/>
</dbReference>
<dbReference type="SUPFAM" id="SSF47266">
    <property type="entry name" value="4-helical cytokines"/>
    <property type="match status" value="1"/>
</dbReference>
<dbReference type="PROSITE" id="PS00520">
    <property type="entry name" value="INTERLEUKIN_10"/>
    <property type="match status" value="1"/>
</dbReference>
<evidence type="ECO:0000250" key="1">
    <source>
        <dbReference type="UniProtKB" id="Q9NYY1"/>
    </source>
</evidence>
<evidence type="ECO:0000255" key="2"/>
<evidence type="ECO:0000269" key="3">
    <source>
    </source>
</evidence>
<evidence type="ECO:0000269" key="4">
    <source>
    </source>
</evidence>
<evidence type="ECO:0000305" key="5"/>
<proteinExistence type="evidence at transcript level"/>